<proteinExistence type="inferred from homology"/>
<geneLocation type="chloroplast"/>
<evidence type="ECO:0000255" key="1">
    <source>
        <dbReference type="HAMAP-Rule" id="MF_01338"/>
    </source>
</evidence>
<name>RBL_SECDI</name>
<accession>P28454</accession>
<dbReference type="EC" id="4.1.1.39" evidence="1"/>
<dbReference type="EMBL" id="L01955">
    <property type="protein sequence ID" value="AAA84611.2"/>
    <property type="molecule type" value="Genomic_DNA"/>
</dbReference>
<dbReference type="SMR" id="P28454"/>
<dbReference type="GO" id="GO:0009507">
    <property type="term" value="C:chloroplast"/>
    <property type="evidence" value="ECO:0007669"/>
    <property type="project" value="UniProtKB-SubCell"/>
</dbReference>
<dbReference type="GO" id="GO:0000287">
    <property type="term" value="F:magnesium ion binding"/>
    <property type="evidence" value="ECO:0007669"/>
    <property type="project" value="InterPro"/>
</dbReference>
<dbReference type="GO" id="GO:0004497">
    <property type="term" value="F:monooxygenase activity"/>
    <property type="evidence" value="ECO:0007669"/>
    <property type="project" value="UniProtKB-KW"/>
</dbReference>
<dbReference type="GO" id="GO:0016984">
    <property type="term" value="F:ribulose-bisphosphate carboxylase activity"/>
    <property type="evidence" value="ECO:0007669"/>
    <property type="project" value="UniProtKB-EC"/>
</dbReference>
<dbReference type="GO" id="GO:0009853">
    <property type="term" value="P:photorespiration"/>
    <property type="evidence" value="ECO:0007669"/>
    <property type="project" value="UniProtKB-KW"/>
</dbReference>
<dbReference type="GO" id="GO:0019253">
    <property type="term" value="P:reductive pentose-phosphate cycle"/>
    <property type="evidence" value="ECO:0007669"/>
    <property type="project" value="UniProtKB-KW"/>
</dbReference>
<dbReference type="CDD" id="cd08212">
    <property type="entry name" value="RuBisCO_large_I"/>
    <property type="match status" value="1"/>
</dbReference>
<dbReference type="FunFam" id="3.20.20.110:FF:000001">
    <property type="entry name" value="Ribulose bisphosphate carboxylase large chain"/>
    <property type="match status" value="1"/>
</dbReference>
<dbReference type="FunFam" id="3.30.70.150:FF:000001">
    <property type="entry name" value="Ribulose bisphosphate carboxylase large chain"/>
    <property type="match status" value="1"/>
</dbReference>
<dbReference type="Gene3D" id="3.20.20.110">
    <property type="entry name" value="Ribulose bisphosphate carboxylase, large subunit, C-terminal domain"/>
    <property type="match status" value="1"/>
</dbReference>
<dbReference type="Gene3D" id="3.30.70.150">
    <property type="entry name" value="RuBisCO large subunit, N-terminal domain"/>
    <property type="match status" value="1"/>
</dbReference>
<dbReference type="HAMAP" id="MF_01338">
    <property type="entry name" value="RuBisCO_L_type1"/>
    <property type="match status" value="1"/>
</dbReference>
<dbReference type="InterPro" id="IPR033966">
    <property type="entry name" value="RuBisCO"/>
</dbReference>
<dbReference type="InterPro" id="IPR020878">
    <property type="entry name" value="RuBisCo_large_chain_AS"/>
</dbReference>
<dbReference type="InterPro" id="IPR000685">
    <property type="entry name" value="RuBisCO_lsu_C"/>
</dbReference>
<dbReference type="InterPro" id="IPR036376">
    <property type="entry name" value="RuBisCO_lsu_C_sf"/>
</dbReference>
<dbReference type="InterPro" id="IPR017443">
    <property type="entry name" value="RuBisCO_lsu_fd_N"/>
</dbReference>
<dbReference type="InterPro" id="IPR036422">
    <property type="entry name" value="RuBisCO_lsu_N_sf"/>
</dbReference>
<dbReference type="InterPro" id="IPR020888">
    <property type="entry name" value="RuBisCO_lsuI"/>
</dbReference>
<dbReference type="NCBIfam" id="NF003252">
    <property type="entry name" value="PRK04208.1"/>
    <property type="match status" value="1"/>
</dbReference>
<dbReference type="PANTHER" id="PTHR42704">
    <property type="entry name" value="RIBULOSE BISPHOSPHATE CARBOXYLASE"/>
    <property type="match status" value="1"/>
</dbReference>
<dbReference type="PANTHER" id="PTHR42704:SF16">
    <property type="entry name" value="RIBULOSE BISPHOSPHATE CARBOXYLASE LARGE CHAIN"/>
    <property type="match status" value="1"/>
</dbReference>
<dbReference type="Pfam" id="PF00016">
    <property type="entry name" value="RuBisCO_large"/>
    <property type="match status" value="1"/>
</dbReference>
<dbReference type="Pfam" id="PF02788">
    <property type="entry name" value="RuBisCO_large_N"/>
    <property type="match status" value="1"/>
</dbReference>
<dbReference type="SFLD" id="SFLDG01052">
    <property type="entry name" value="RuBisCO"/>
    <property type="match status" value="1"/>
</dbReference>
<dbReference type="SFLD" id="SFLDS00014">
    <property type="entry name" value="RuBisCO"/>
    <property type="match status" value="1"/>
</dbReference>
<dbReference type="SFLD" id="SFLDG00301">
    <property type="entry name" value="RuBisCO-like_proteins"/>
    <property type="match status" value="1"/>
</dbReference>
<dbReference type="SUPFAM" id="SSF51649">
    <property type="entry name" value="RuBisCo, C-terminal domain"/>
    <property type="match status" value="1"/>
</dbReference>
<dbReference type="SUPFAM" id="SSF54966">
    <property type="entry name" value="RuBisCO, large subunit, small (N-terminal) domain"/>
    <property type="match status" value="1"/>
</dbReference>
<dbReference type="PROSITE" id="PS00157">
    <property type="entry name" value="RUBISCO_LARGE"/>
    <property type="match status" value="1"/>
</dbReference>
<feature type="chain" id="PRO_0000062592" description="Ribulose bisphosphate carboxylase large chain">
    <location>
        <begin position="1" status="less than"/>
        <end position="465"/>
    </location>
</feature>
<feature type="active site" description="Proton acceptor" evidence="1">
    <location>
        <position position="165"/>
    </location>
</feature>
<feature type="active site" description="Proton acceptor" evidence="1">
    <location>
        <position position="284"/>
    </location>
</feature>
<feature type="binding site" description="in homodimeric partner" evidence="1">
    <location>
        <position position="113"/>
    </location>
    <ligand>
        <name>substrate</name>
    </ligand>
</feature>
<feature type="binding site" evidence="1">
    <location>
        <position position="163"/>
    </location>
    <ligand>
        <name>substrate</name>
    </ligand>
</feature>
<feature type="binding site" evidence="1">
    <location>
        <position position="167"/>
    </location>
    <ligand>
        <name>substrate</name>
    </ligand>
</feature>
<feature type="binding site" description="via carbamate group" evidence="1">
    <location>
        <position position="191"/>
    </location>
    <ligand>
        <name>Mg(2+)</name>
        <dbReference type="ChEBI" id="CHEBI:18420"/>
    </ligand>
</feature>
<feature type="binding site" evidence="1">
    <location>
        <position position="193"/>
    </location>
    <ligand>
        <name>Mg(2+)</name>
        <dbReference type="ChEBI" id="CHEBI:18420"/>
    </ligand>
</feature>
<feature type="binding site" evidence="1">
    <location>
        <position position="194"/>
    </location>
    <ligand>
        <name>Mg(2+)</name>
        <dbReference type="ChEBI" id="CHEBI:18420"/>
    </ligand>
</feature>
<feature type="binding site" evidence="1">
    <location>
        <position position="285"/>
    </location>
    <ligand>
        <name>substrate</name>
    </ligand>
</feature>
<feature type="binding site" evidence="1">
    <location>
        <position position="317"/>
    </location>
    <ligand>
        <name>substrate</name>
    </ligand>
</feature>
<feature type="binding site" evidence="1">
    <location>
        <position position="369"/>
    </location>
    <ligand>
        <name>substrate</name>
    </ligand>
</feature>
<feature type="site" description="Transition state stabilizer" evidence="1">
    <location>
        <position position="324"/>
    </location>
</feature>
<feature type="modified residue" description="N6,N6,N6-trimethyllysine" evidence="1">
    <location>
        <position position="4"/>
    </location>
</feature>
<feature type="modified residue" description="N6-carboxylysine" evidence="1">
    <location>
        <position position="191"/>
    </location>
</feature>
<feature type="disulfide bond" description="Interchain; in linked form" evidence="1">
    <location>
        <position position="237"/>
    </location>
</feature>
<feature type="non-terminal residue">
    <location>
        <position position="1"/>
    </location>
</feature>
<comment type="function">
    <text evidence="1">RuBisCO catalyzes two reactions: the carboxylation of D-ribulose 1,5-bisphosphate, the primary event in carbon dioxide fixation, as well as the oxidative fragmentation of the pentose substrate in the photorespiration process. Both reactions occur simultaneously and in competition at the same active site.</text>
</comment>
<comment type="catalytic activity">
    <reaction evidence="1">
        <text>2 (2R)-3-phosphoglycerate + 2 H(+) = D-ribulose 1,5-bisphosphate + CO2 + H2O</text>
        <dbReference type="Rhea" id="RHEA:23124"/>
        <dbReference type="ChEBI" id="CHEBI:15377"/>
        <dbReference type="ChEBI" id="CHEBI:15378"/>
        <dbReference type="ChEBI" id="CHEBI:16526"/>
        <dbReference type="ChEBI" id="CHEBI:57870"/>
        <dbReference type="ChEBI" id="CHEBI:58272"/>
        <dbReference type="EC" id="4.1.1.39"/>
    </reaction>
</comment>
<comment type="catalytic activity">
    <reaction evidence="1">
        <text>D-ribulose 1,5-bisphosphate + O2 = 2-phosphoglycolate + (2R)-3-phosphoglycerate + 2 H(+)</text>
        <dbReference type="Rhea" id="RHEA:36631"/>
        <dbReference type="ChEBI" id="CHEBI:15378"/>
        <dbReference type="ChEBI" id="CHEBI:15379"/>
        <dbReference type="ChEBI" id="CHEBI:57870"/>
        <dbReference type="ChEBI" id="CHEBI:58033"/>
        <dbReference type="ChEBI" id="CHEBI:58272"/>
    </reaction>
</comment>
<comment type="cofactor">
    <cofactor evidence="1">
        <name>Mg(2+)</name>
        <dbReference type="ChEBI" id="CHEBI:18420"/>
    </cofactor>
    <text evidence="1">Binds 1 Mg(2+) ion per subunit.</text>
</comment>
<comment type="subunit">
    <text evidence="1">Heterohexadecamer of 8 large chains and 8 small chains; disulfide-linked. The disulfide link is formed within the large subunit homodimers.</text>
</comment>
<comment type="subcellular location">
    <subcellularLocation>
        <location>Plastid</location>
        <location>Chloroplast</location>
    </subcellularLocation>
</comment>
<comment type="PTM">
    <text evidence="1">The disulfide bond which can form in the large chain dimeric partners within the hexadecamer appears to be associated with oxidative stress and protein turnover.</text>
</comment>
<comment type="miscellaneous">
    <text evidence="1">The basic functional RuBisCO is composed of a large chain homodimer in a 'head-to-tail' conformation. In form I RuBisCO this homodimer is arranged in a barrel-like tetramer with the small subunits forming a tetrameric 'cap' on each end of the 'barrel'.</text>
</comment>
<comment type="similarity">
    <text evidence="1">Belongs to the RuBisCO large chain family. Type I subfamily.</text>
</comment>
<reference key="1">
    <citation type="journal article" date="1992" name="Science">
        <title>Carnivorous plants: phylogeny and structural evolution.</title>
        <authorList>
            <person name="Albert V.A."/>
            <person name="Williams S.E."/>
            <person name="Chase M.W."/>
        </authorList>
    </citation>
    <scope>NUCLEOTIDE SEQUENCE [GENOMIC DNA]</scope>
</reference>
<sequence>VGFKAGVKDYKLTYYTPEYETKDTDILAAFRVTPQPGVPAEEAGAAVAAESSTGTWTTVWTDGLTSLDRYKGRCYHIEPVAGEEDQFIAYVAYPLDLFEEGSVTNMFTSIVGNVFGFKALRALRLEDLRIPPSYIKTFQGPPHGIQVERDKLNKYGRPLLGCTIKPKLGLSAKNYGRAVYECLRGGLDFTKDDENVNSQPFMRWRDRFLFCAEAIYKAQAETGEIKGHYLNATAGTCEEMIKRAVFARELGVPIVMHDYLTGGFTANTSLAHYCRDNGLLLHIHRAMHAVIDRQKNHGMHFRVLAKALRLSGGDHIHAGTVVGKLEGEREITLGFVDLLRDDFVEKDRSRGIYFTQDWVSTPGVLPVASGGIHVWHMPALTEIFGDDSVLQFGGGTLGHPWGNAPGAVANRVALEACVRARNEGRDLAREGNEIIREASKWSLELAAACEVWKEIKFNWQAVDTI</sequence>
<keyword id="KW-0113">Calvin cycle</keyword>
<keyword id="KW-0120">Carbon dioxide fixation</keyword>
<keyword id="KW-0150">Chloroplast</keyword>
<keyword id="KW-1015">Disulfide bond</keyword>
<keyword id="KW-0456">Lyase</keyword>
<keyword id="KW-0460">Magnesium</keyword>
<keyword id="KW-0479">Metal-binding</keyword>
<keyword id="KW-0488">Methylation</keyword>
<keyword id="KW-0503">Monooxygenase</keyword>
<keyword id="KW-0560">Oxidoreductase</keyword>
<keyword id="KW-0601">Photorespiration</keyword>
<keyword id="KW-0602">Photosynthesis</keyword>
<keyword id="KW-0934">Plastid</keyword>
<gene>
    <name evidence="1" type="primary">rbcL</name>
</gene>
<protein>
    <recommendedName>
        <fullName evidence="1">Ribulose bisphosphate carboxylase large chain</fullName>
        <shortName evidence="1">RuBisCO large subunit</shortName>
        <ecNumber evidence="1">4.1.1.39</ecNumber>
    </recommendedName>
</protein>
<organism>
    <name type="scientific">Securidaca diversifolia</name>
    <name type="common">Easter flower</name>
    <name type="synonym">Polygala diversifolia</name>
    <dbReference type="NCBI Taxonomy" id="4278"/>
    <lineage>
        <taxon>Eukaryota</taxon>
        <taxon>Viridiplantae</taxon>
        <taxon>Streptophyta</taxon>
        <taxon>Embryophyta</taxon>
        <taxon>Tracheophyta</taxon>
        <taxon>Spermatophyta</taxon>
        <taxon>Magnoliopsida</taxon>
        <taxon>eudicotyledons</taxon>
        <taxon>Gunneridae</taxon>
        <taxon>Pentapetalae</taxon>
        <taxon>rosids</taxon>
        <taxon>fabids</taxon>
        <taxon>Fabales</taxon>
        <taxon>Polygalaceae</taxon>
        <taxon>Securidaca</taxon>
    </lineage>
</organism>